<evidence type="ECO:0000250" key="1"/>
<evidence type="ECO:0000305" key="2"/>
<evidence type="ECO:0007829" key="3">
    <source>
        <dbReference type="PDB" id="1SOV"/>
    </source>
</evidence>
<evidence type="ECO:0007829" key="4">
    <source>
        <dbReference type="PDB" id="1SOW"/>
    </source>
</evidence>
<accession>Q27797</accession>
<comment type="catalytic activity">
    <reaction>
        <text>(S)-lactate + NAD(+) = pyruvate + NADH + H(+)</text>
        <dbReference type="Rhea" id="RHEA:23444"/>
        <dbReference type="ChEBI" id="CHEBI:15361"/>
        <dbReference type="ChEBI" id="CHEBI:15378"/>
        <dbReference type="ChEBI" id="CHEBI:16651"/>
        <dbReference type="ChEBI" id="CHEBI:57540"/>
        <dbReference type="ChEBI" id="CHEBI:57945"/>
        <dbReference type="EC" id="1.1.1.27"/>
    </reaction>
</comment>
<comment type="pathway">
    <text>Fermentation; pyruvate fermentation to lactate; (S)-lactate from pyruvate: step 1/1.</text>
</comment>
<comment type="subunit">
    <text evidence="1">Homotetramer.</text>
</comment>
<comment type="similarity">
    <text evidence="2">Belongs to the LDH/MDH superfamily. LDH family.</text>
</comment>
<sequence>MTGTVSRRKKIAMIGSGMIGGTMGYLCVLRELADVVLFDVVTGMPEGKALDDSQATSIADTNVSVTSANQYEKIAGSDVVIITAGLTKVPGKSDKEWSRNDLLPFNAKIIREVAQGVKKYCPLAFVIVVTNPLDCMVKCFHEASGLPKNMVCGMANVLDSARFRRFIADQLEISPRDIQATVIGTHGDHMLPLARYVTVSGFPLREFIKKGKMTEAKLAEIVERTKKAGGEIVRLLGQGSAYYAPALSAITMAQAFLKDEKRVLPCSVYCQGEYGLHDMFIGLPAVIGGGGIEQVIELELTHEEQECFRKSVDDVVELNKSLAALG</sequence>
<reference key="1">
    <citation type="journal article" date="1995" name="Mol. Biochem. Parasitol.">
        <title>A bradyzoite stage-specifically expressed gene of Toxoplasma gondii encodes a polypeptide homologous to lactate dehydrogenase.</title>
        <authorList>
            <person name="Yang S."/>
            <person name="Parmley S.F."/>
        </authorList>
    </citation>
    <scope>NUCLEOTIDE SEQUENCE [MRNA]</scope>
    <source>
        <strain>ATCC 50611 / Me49</strain>
    </source>
</reference>
<keyword id="KW-0002">3D-structure</keyword>
<keyword id="KW-0520">NAD</keyword>
<keyword id="KW-0560">Oxidoreductase</keyword>
<organism>
    <name type="scientific">Toxoplasma gondii</name>
    <dbReference type="NCBI Taxonomy" id="5811"/>
    <lineage>
        <taxon>Eukaryota</taxon>
        <taxon>Sar</taxon>
        <taxon>Alveolata</taxon>
        <taxon>Apicomplexa</taxon>
        <taxon>Conoidasida</taxon>
        <taxon>Coccidia</taxon>
        <taxon>Eucoccidiorida</taxon>
        <taxon>Eimeriorina</taxon>
        <taxon>Sarcocystidae</taxon>
        <taxon>Toxoplasma</taxon>
    </lineage>
</organism>
<name>LDH_TOXGO</name>
<dbReference type="EC" id="1.1.1.27"/>
<dbReference type="EMBL" id="U23207">
    <property type="protein sequence ID" value="AAC46863.1"/>
    <property type="molecule type" value="mRNA"/>
</dbReference>
<dbReference type="PDB" id="1SOV">
    <property type="method" value="X-ray"/>
    <property type="resolution" value="1.90 A"/>
    <property type="chains" value="A/B=1-326"/>
</dbReference>
<dbReference type="PDB" id="1SOW">
    <property type="method" value="X-ray"/>
    <property type="resolution" value="1.90 A"/>
    <property type="chains" value="A/B=1-326"/>
</dbReference>
<dbReference type="PDB" id="3CZM">
    <property type="method" value="X-ray"/>
    <property type="resolution" value="2.30 A"/>
    <property type="chains" value="A/B=1-326"/>
</dbReference>
<dbReference type="PDBsum" id="1SOV"/>
<dbReference type="PDBsum" id="1SOW"/>
<dbReference type="PDBsum" id="3CZM"/>
<dbReference type="SMR" id="Q27797"/>
<dbReference type="VEuPathDB" id="ToxoDB:TGARI_291040"/>
<dbReference type="VEuPathDB" id="ToxoDB:TGCAST_291040"/>
<dbReference type="VEuPathDB" id="ToxoDB:TGCOUG_291040"/>
<dbReference type="VEuPathDB" id="ToxoDB:TGDOM2_291040"/>
<dbReference type="VEuPathDB" id="ToxoDB:TGFOU_291040"/>
<dbReference type="VEuPathDB" id="ToxoDB:TGGT1_291040"/>
<dbReference type="VEuPathDB" id="ToxoDB:TGMAS_291040"/>
<dbReference type="VEuPathDB" id="ToxoDB:TGME49_291040"/>
<dbReference type="VEuPathDB" id="ToxoDB:TGP89_291040"/>
<dbReference type="VEuPathDB" id="ToxoDB:TGPRC2_291040"/>
<dbReference type="VEuPathDB" id="ToxoDB:TGRH88_015400"/>
<dbReference type="VEuPathDB" id="ToxoDB:TGRUB_291040"/>
<dbReference type="VEuPathDB" id="ToxoDB:TGVAND_291040"/>
<dbReference type="VEuPathDB" id="ToxoDB:TGVEG_291040"/>
<dbReference type="BRENDA" id="1.1.1.27">
    <property type="organism ID" value="6411"/>
</dbReference>
<dbReference type="SABIO-RK" id="Q27797"/>
<dbReference type="UniPathway" id="UPA00554">
    <property type="reaction ID" value="UER00611"/>
</dbReference>
<dbReference type="EvolutionaryTrace" id="Q27797"/>
<dbReference type="GO" id="GO:0004459">
    <property type="term" value="F:L-lactate dehydrogenase activity"/>
    <property type="evidence" value="ECO:0007669"/>
    <property type="project" value="UniProtKB-EC"/>
</dbReference>
<dbReference type="GO" id="GO:0006089">
    <property type="term" value="P:lactate metabolic process"/>
    <property type="evidence" value="ECO:0007669"/>
    <property type="project" value="TreeGrafter"/>
</dbReference>
<dbReference type="CDD" id="cd01339">
    <property type="entry name" value="LDH-like_MDH"/>
    <property type="match status" value="1"/>
</dbReference>
<dbReference type="FunFam" id="3.90.110.10:FF:000004">
    <property type="entry name" value="Malate dehydrogenase"/>
    <property type="match status" value="1"/>
</dbReference>
<dbReference type="Gene3D" id="3.90.110.10">
    <property type="entry name" value="Lactate dehydrogenase/glycoside hydrolase, family 4, C-terminal"/>
    <property type="match status" value="1"/>
</dbReference>
<dbReference type="Gene3D" id="3.40.50.720">
    <property type="entry name" value="NAD(P)-binding Rossmann-like Domain"/>
    <property type="match status" value="1"/>
</dbReference>
<dbReference type="InterPro" id="IPR001557">
    <property type="entry name" value="L-lactate/malate_DH"/>
</dbReference>
<dbReference type="InterPro" id="IPR022383">
    <property type="entry name" value="Lactate/malate_DH_C"/>
</dbReference>
<dbReference type="InterPro" id="IPR001236">
    <property type="entry name" value="Lactate/malate_DH_N"/>
</dbReference>
<dbReference type="InterPro" id="IPR015955">
    <property type="entry name" value="Lactate_DH/Glyco_Ohase_4_C"/>
</dbReference>
<dbReference type="InterPro" id="IPR011275">
    <property type="entry name" value="Malate_DH_type3"/>
</dbReference>
<dbReference type="InterPro" id="IPR036291">
    <property type="entry name" value="NAD(P)-bd_dom_sf"/>
</dbReference>
<dbReference type="NCBIfam" id="TIGR01763">
    <property type="entry name" value="MalateDH_bact"/>
    <property type="match status" value="1"/>
</dbReference>
<dbReference type="NCBIfam" id="NF004863">
    <property type="entry name" value="PRK06223.1"/>
    <property type="match status" value="1"/>
</dbReference>
<dbReference type="PANTHER" id="PTHR43128">
    <property type="entry name" value="L-2-HYDROXYCARBOXYLATE DEHYDROGENASE (NAD(P)(+))"/>
    <property type="match status" value="1"/>
</dbReference>
<dbReference type="PANTHER" id="PTHR43128:SF16">
    <property type="entry name" value="L-LACTATE DEHYDROGENASE"/>
    <property type="match status" value="1"/>
</dbReference>
<dbReference type="Pfam" id="PF02866">
    <property type="entry name" value="Ldh_1_C"/>
    <property type="match status" value="1"/>
</dbReference>
<dbReference type="Pfam" id="PF00056">
    <property type="entry name" value="Ldh_1_N"/>
    <property type="match status" value="1"/>
</dbReference>
<dbReference type="PIRSF" id="PIRSF000102">
    <property type="entry name" value="Lac_mal_DH"/>
    <property type="match status" value="1"/>
</dbReference>
<dbReference type="PRINTS" id="PR00086">
    <property type="entry name" value="LLDHDRGNASE"/>
</dbReference>
<dbReference type="SUPFAM" id="SSF56327">
    <property type="entry name" value="LDH C-terminal domain-like"/>
    <property type="match status" value="1"/>
</dbReference>
<dbReference type="SUPFAM" id="SSF51735">
    <property type="entry name" value="NAD(P)-binding Rossmann-fold domains"/>
    <property type="match status" value="1"/>
</dbReference>
<protein>
    <recommendedName>
        <fullName>L-lactate dehydrogenase</fullName>
        <shortName>LDH</shortName>
        <ecNumber>1.1.1.27</ecNumber>
    </recommendedName>
</protein>
<feature type="chain" id="PRO_0000168497" description="L-lactate dehydrogenase">
    <location>
        <begin position="1"/>
        <end position="326"/>
    </location>
</feature>
<feature type="active site" description="Proton acceptor" evidence="1">
    <location>
        <position position="186"/>
    </location>
</feature>
<feature type="binding site" evidence="1">
    <location>
        <begin position="39"/>
        <end position="60"/>
    </location>
    <ligand>
        <name>NAD(+)</name>
        <dbReference type="ChEBI" id="CHEBI:57540"/>
    </ligand>
</feature>
<feature type="binding site" evidence="1">
    <location>
        <position position="99"/>
    </location>
    <ligand>
        <name>substrate</name>
    </ligand>
</feature>
<feature type="binding site" evidence="1">
    <location>
        <position position="131"/>
    </location>
    <ligand>
        <name>NAD(+)</name>
        <dbReference type="ChEBI" id="CHEBI:57540"/>
    </ligand>
</feature>
<feature type="binding site" evidence="1">
    <location>
        <position position="131"/>
    </location>
    <ligand>
        <name>substrate</name>
    </ligand>
</feature>
<feature type="binding site" evidence="1">
    <location>
        <position position="162"/>
    </location>
    <ligand>
        <name>substrate</name>
    </ligand>
</feature>
<feature type="strand" evidence="3">
    <location>
        <begin position="10"/>
        <end position="15"/>
    </location>
</feature>
<feature type="helix" evidence="3">
    <location>
        <begin position="18"/>
        <end position="30"/>
    </location>
</feature>
<feature type="strand" evidence="3">
    <location>
        <begin position="34"/>
        <end position="38"/>
    </location>
</feature>
<feature type="strand" evidence="4">
    <location>
        <begin position="40"/>
        <end position="43"/>
    </location>
</feature>
<feature type="helix" evidence="3">
    <location>
        <begin position="44"/>
        <end position="59"/>
    </location>
</feature>
<feature type="strand" evidence="3">
    <location>
        <begin position="65"/>
        <end position="70"/>
    </location>
</feature>
<feature type="helix" evidence="3">
    <location>
        <begin position="71"/>
        <end position="74"/>
    </location>
</feature>
<feature type="strand" evidence="3">
    <location>
        <begin position="78"/>
        <end position="82"/>
    </location>
</feature>
<feature type="helix" evidence="4">
    <location>
        <begin position="94"/>
        <end position="96"/>
    </location>
</feature>
<feature type="helix" evidence="3">
    <location>
        <begin position="99"/>
        <end position="102"/>
    </location>
</feature>
<feature type="helix" evidence="3">
    <location>
        <begin position="103"/>
        <end position="120"/>
    </location>
</feature>
<feature type="strand" evidence="3">
    <location>
        <begin position="125"/>
        <end position="128"/>
    </location>
</feature>
<feature type="helix" evidence="3">
    <location>
        <begin position="133"/>
        <end position="144"/>
    </location>
</feature>
<feature type="helix" evidence="3">
    <location>
        <begin position="148"/>
        <end position="150"/>
    </location>
</feature>
<feature type="strand" evidence="3">
    <location>
        <begin position="151"/>
        <end position="153"/>
    </location>
</feature>
<feature type="helix" evidence="3">
    <location>
        <begin position="156"/>
        <end position="171"/>
    </location>
</feature>
<feature type="helix" evidence="3">
    <location>
        <begin position="175"/>
        <end position="177"/>
    </location>
</feature>
<feature type="strand" evidence="3">
    <location>
        <begin position="182"/>
        <end position="184"/>
    </location>
</feature>
<feature type="helix" evidence="3">
    <location>
        <begin position="187"/>
        <end position="189"/>
    </location>
</feature>
<feature type="helix" evidence="3">
    <location>
        <begin position="194"/>
        <end position="196"/>
    </location>
</feature>
<feature type="helix" evidence="3">
    <location>
        <begin position="204"/>
        <end position="209"/>
    </location>
</feature>
<feature type="helix" evidence="3">
    <location>
        <begin position="215"/>
        <end position="236"/>
    </location>
</feature>
<feature type="strand" evidence="3">
    <location>
        <begin position="237"/>
        <end position="239"/>
    </location>
</feature>
<feature type="helix" evidence="3">
    <location>
        <begin position="243"/>
        <end position="257"/>
    </location>
</feature>
<feature type="strand" evidence="3">
    <location>
        <begin position="266"/>
        <end position="272"/>
    </location>
</feature>
<feature type="helix" evidence="3">
    <location>
        <begin position="273"/>
        <end position="275"/>
    </location>
</feature>
<feature type="strand" evidence="3">
    <location>
        <begin position="277"/>
        <end position="283"/>
    </location>
</feature>
<feature type="strand" evidence="3">
    <location>
        <begin position="285"/>
        <end position="288"/>
    </location>
</feature>
<feature type="strand" evidence="3">
    <location>
        <begin position="291"/>
        <end position="295"/>
    </location>
</feature>
<feature type="helix" evidence="3">
    <location>
        <begin position="302"/>
        <end position="323"/>
    </location>
</feature>
<proteinExistence type="evidence at protein level"/>